<sequence length="405" mass="46389">MAFLFRIRTSEFILQKATQFRLKSSSSSIFTLKSLTSKQKKSRDTLSLLKSENNPDRILEICRSTSLSPDYHVDRIIFSVAVVTLAREKHFVAVSQLLDGFIQNQPDPKSESFAVRAIILYGRANMLDRSIQTFRNLEQYEIPRTVKSLNALLFACLMAKDYKEANRVYLEMPKMYGIEPDLETYNRMIRVLCESGSTSSSYSIVAEMERKWIKPTAASFGLMIDGFYKEEKFDEVRKVMRMMDEFGVHVGVATYNIMIQCLCKRKKSAEAKALIDGVMSCRMRPNSVTYSLLIHGFCSEENLDEAMNLFEVMVCNGYKPDSECYFTLIHCLCKGGDFETALILCRESMEKNWVPSFSVMKWLVNGLASRSKVDEAKELIAVVKEKFTRNVDLWNEVEAALPLPQ</sequence>
<keyword id="KW-0496">Mitochondrion</keyword>
<keyword id="KW-1185">Reference proteome</keyword>
<keyword id="KW-0677">Repeat</keyword>
<keyword id="KW-0809">Transit peptide</keyword>
<reference key="1">
    <citation type="journal article" date="2000" name="Nature">
        <title>Sequence and analysis of chromosome 1 of the plant Arabidopsis thaliana.</title>
        <authorList>
            <person name="Theologis A."/>
            <person name="Ecker J.R."/>
            <person name="Palm C.J."/>
            <person name="Federspiel N.A."/>
            <person name="Kaul S."/>
            <person name="White O."/>
            <person name="Alonso J."/>
            <person name="Altafi H."/>
            <person name="Araujo R."/>
            <person name="Bowman C.L."/>
            <person name="Brooks S.Y."/>
            <person name="Buehler E."/>
            <person name="Chan A."/>
            <person name="Chao Q."/>
            <person name="Chen H."/>
            <person name="Cheuk R.F."/>
            <person name="Chin C.W."/>
            <person name="Chung M.K."/>
            <person name="Conn L."/>
            <person name="Conway A.B."/>
            <person name="Conway A.R."/>
            <person name="Creasy T.H."/>
            <person name="Dewar K."/>
            <person name="Dunn P."/>
            <person name="Etgu P."/>
            <person name="Feldblyum T.V."/>
            <person name="Feng J.-D."/>
            <person name="Fong B."/>
            <person name="Fujii C.Y."/>
            <person name="Gill J.E."/>
            <person name="Goldsmith A.D."/>
            <person name="Haas B."/>
            <person name="Hansen N.F."/>
            <person name="Hughes B."/>
            <person name="Huizar L."/>
            <person name="Hunter J.L."/>
            <person name="Jenkins J."/>
            <person name="Johnson-Hopson C."/>
            <person name="Khan S."/>
            <person name="Khaykin E."/>
            <person name="Kim C.J."/>
            <person name="Koo H.L."/>
            <person name="Kremenetskaia I."/>
            <person name="Kurtz D.B."/>
            <person name="Kwan A."/>
            <person name="Lam B."/>
            <person name="Langin-Hooper S."/>
            <person name="Lee A."/>
            <person name="Lee J.M."/>
            <person name="Lenz C.A."/>
            <person name="Li J.H."/>
            <person name="Li Y.-P."/>
            <person name="Lin X."/>
            <person name="Liu S.X."/>
            <person name="Liu Z.A."/>
            <person name="Luros J.S."/>
            <person name="Maiti R."/>
            <person name="Marziali A."/>
            <person name="Militscher J."/>
            <person name="Miranda M."/>
            <person name="Nguyen M."/>
            <person name="Nierman W.C."/>
            <person name="Osborne B.I."/>
            <person name="Pai G."/>
            <person name="Peterson J."/>
            <person name="Pham P.K."/>
            <person name="Rizzo M."/>
            <person name="Rooney T."/>
            <person name="Rowley D."/>
            <person name="Sakano H."/>
            <person name="Salzberg S.L."/>
            <person name="Schwartz J.R."/>
            <person name="Shinn P."/>
            <person name="Southwick A.M."/>
            <person name="Sun H."/>
            <person name="Tallon L.J."/>
            <person name="Tambunga G."/>
            <person name="Toriumi M.J."/>
            <person name="Town C.D."/>
            <person name="Utterback T."/>
            <person name="Van Aken S."/>
            <person name="Vaysberg M."/>
            <person name="Vysotskaia V.S."/>
            <person name="Walker M."/>
            <person name="Wu D."/>
            <person name="Yu G."/>
            <person name="Fraser C.M."/>
            <person name="Venter J.C."/>
            <person name="Davis R.W."/>
        </authorList>
    </citation>
    <scope>NUCLEOTIDE SEQUENCE [LARGE SCALE GENOMIC DNA]</scope>
    <source>
        <strain>cv. Columbia</strain>
    </source>
</reference>
<reference key="2">
    <citation type="journal article" date="2017" name="Plant J.">
        <title>Araport11: a complete reannotation of the Arabidopsis thaliana reference genome.</title>
        <authorList>
            <person name="Cheng C.Y."/>
            <person name="Krishnakumar V."/>
            <person name="Chan A.P."/>
            <person name="Thibaud-Nissen F."/>
            <person name="Schobel S."/>
            <person name="Town C.D."/>
        </authorList>
    </citation>
    <scope>GENOME REANNOTATION</scope>
    <source>
        <strain>cv. Columbia</strain>
    </source>
</reference>
<reference key="3">
    <citation type="journal article" date="2003" name="Science">
        <title>Empirical analysis of transcriptional activity in the Arabidopsis genome.</title>
        <authorList>
            <person name="Yamada K."/>
            <person name="Lim J."/>
            <person name="Dale J.M."/>
            <person name="Chen H."/>
            <person name="Shinn P."/>
            <person name="Palm C.J."/>
            <person name="Southwick A.M."/>
            <person name="Wu H.C."/>
            <person name="Kim C.J."/>
            <person name="Nguyen M."/>
            <person name="Pham P.K."/>
            <person name="Cheuk R.F."/>
            <person name="Karlin-Newmann G."/>
            <person name="Liu S.X."/>
            <person name="Lam B."/>
            <person name="Sakano H."/>
            <person name="Wu T."/>
            <person name="Yu G."/>
            <person name="Miranda M."/>
            <person name="Quach H.L."/>
            <person name="Tripp M."/>
            <person name="Chang C.H."/>
            <person name="Lee J.M."/>
            <person name="Toriumi M.J."/>
            <person name="Chan M.M."/>
            <person name="Tang C.C."/>
            <person name="Onodera C.S."/>
            <person name="Deng J.M."/>
            <person name="Akiyama K."/>
            <person name="Ansari Y."/>
            <person name="Arakawa T."/>
            <person name="Banh J."/>
            <person name="Banno F."/>
            <person name="Bowser L."/>
            <person name="Brooks S.Y."/>
            <person name="Carninci P."/>
            <person name="Chao Q."/>
            <person name="Choy N."/>
            <person name="Enju A."/>
            <person name="Goldsmith A.D."/>
            <person name="Gurjal M."/>
            <person name="Hansen N.F."/>
            <person name="Hayashizaki Y."/>
            <person name="Johnson-Hopson C."/>
            <person name="Hsuan V.W."/>
            <person name="Iida K."/>
            <person name="Karnes M."/>
            <person name="Khan S."/>
            <person name="Koesema E."/>
            <person name="Ishida J."/>
            <person name="Jiang P.X."/>
            <person name="Jones T."/>
            <person name="Kawai J."/>
            <person name="Kamiya A."/>
            <person name="Meyers C."/>
            <person name="Nakajima M."/>
            <person name="Narusaka M."/>
            <person name="Seki M."/>
            <person name="Sakurai T."/>
            <person name="Satou M."/>
            <person name="Tamse R."/>
            <person name="Vaysberg M."/>
            <person name="Wallender E.K."/>
            <person name="Wong C."/>
            <person name="Yamamura Y."/>
            <person name="Yuan S."/>
            <person name="Shinozaki K."/>
            <person name="Davis R.W."/>
            <person name="Theologis A."/>
            <person name="Ecker J.R."/>
        </authorList>
    </citation>
    <scope>NUCLEOTIDE SEQUENCE [LARGE SCALE MRNA]</scope>
    <source>
        <strain>cv. Columbia</strain>
    </source>
</reference>
<reference key="4">
    <citation type="submission" date="2002-03" db="EMBL/GenBank/DDBJ databases">
        <title>Full-length cDNA from Arabidopsis thaliana.</title>
        <authorList>
            <person name="Brover V.V."/>
            <person name="Troukhan M.E."/>
            <person name="Alexandrov N.A."/>
            <person name="Lu Y.-P."/>
            <person name="Flavell R.B."/>
            <person name="Feldmann K.A."/>
        </authorList>
    </citation>
    <scope>NUCLEOTIDE SEQUENCE [LARGE SCALE MRNA]</scope>
</reference>
<reference key="5">
    <citation type="journal article" date="2004" name="Plant Cell">
        <title>Experimental analysis of the Arabidopsis mitochondrial proteome highlights signaling and regulatory components, provides assessment of targeting prediction programs, and indicates plant-specific mitochondrial proteins.</title>
        <authorList>
            <person name="Heazlewood J.L."/>
            <person name="Tonti-Filippini J.S."/>
            <person name="Gout A.M."/>
            <person name="Day D.A."/>
            <person name="Whelan J."/>
            <person name="Millar A.H."/>
        </authorList>
    </citation>
    <scope>IDENTIFICATION BY MASS SPECTROMETRY</scope>
    <scope>SUBCELLULAR LOCATION [LARGE SCALE ANALYSIS]</scope>
    <source>
        <strain>cv. Landsberg erecta</strain>
    </source>
</reference>
<reference key="6">
    <citation type="journal article" date="2004" name="Plant Cell">
        <title>Genome-wide analysis of Arabidopsis pentatricopeptide repeat proteins reveals their essential role in organelle biogenesis.</title>
        <authorList>
            <person name="Lurin C."/>
            <person name="Andres C."/>
            <person name="Aubourg S."/>
            <person name="Bellaoui M."/>
            <person name="Bitton F."/>
            <person name="Bruyere C."/>
            <person name="Caboche M."/>
            <person name="Debast C."/>
            <person name="Gualberto J."/>
            <person name="Hoffmann B."/>
            <person name="Lecharny A."/>
            <person name="Le Ret M."/>
            <person name="Martin-Magniette M.-L."/>
            <person name="Mireau H."/>
            <person name="Peeters N."/>
            <person name="Renou J.-P."/>
            <person name="Szurek B."/>
            <person name="Taconnat L."/>
            <person name="Small I."/>
        </authorList>
    </citation>
    <scope>GENE FAMILY</scope>
</reference>
<name>PPR33_ARATH</name>
<proteinExistence type="evidence at protein level"/>
<evidence type="ECO:0000255" key="1"/>
<evidence type="ECO:0000269" key="2">
    <source>
    </source>
</evidence>
<evidence type="ECO:0000305" key="3"/>
<protein>
    <recommendedName>
        <fullName>Pentatricopeptide repeat-containing protein At1g11630, mitochondrial</fullName>
    </recommendedName>
</protein>
<feature type="transit peptide" description="Mitochondrion" evidence="1">
    <location>
        <begin position="1"/>
        <end position="72"/>
    </location>
</feature>
<feature type="chain" id="PRO_0000342774" description="Pentatricopeptide repeat-containing protein At1g11630, mitochondrial">
    <location>
        <begin position="73"/>
        <end position="405"/>
    </location>
</feature>
<feature type="repeat" description="PPR 1">
    <location>
        <begin position="74"/>
        <end position="108"/>
    </location>
</feature>
<feature type="repeat" description="PPR 2">
    <location>
        <begin position="110"/>
        <end position="144"/>
    </location>
</feature>
<feature type="repeat" description="PPR 3">
    <location>
        <begin position="145"/>
        <end position="180"/>
    </location>
</feature>
<feature type="repeat" description="PPR 4">
    <location>
        <begin position="181"/>
        <end position="215"/>
    </location>
</feature>
<feature type="repeat" description="PPR 5">
    <location>
        <begin position="216"/>
        <end position="250"/>
    </location>
</feature>
<feature type="repeat" description="PPR 6">
    <location>
        <begin position="251"/>
        <end position="285"/>
    </location>
</feature>
<feature type="repeat" description="PPR 7">
    <location>
        <begin position="286"/>
        <end position="320"/>
    </location>
</feature>
<feature type="repeat" description="PPR 8">
    <location>
        <begin position="321"/>
        <end position="355"/>
    </location>
</feature>
<feature type="repeat" description="PPR 9">
    <location>
        <begin position="356"/>
        <end position="386"/>
    </location>
</feature>
<dbReference type="EMBL" id="AC007296">
    <property type="protein sequence ID" value="AAD30260.1"/>
    <property type="molecule type" value="Genomic_DNA"/>
</dbReference>
<dbReference type="EMBL" id="CP002684">
    <property type="protein sequence ID" value="AEE28763.1"/>
    <property type="molecule type" value="Genomic_DNA"/>
</dbReference>
<dbReference type="EMBL" id="AF385742">
    <property type="protein sequence ID" value="AAK60332.1"/>
    <property type="molecule type" value="mRNA"/>
</dbReference>
<dbReference type="EMBL" id="AY081736">
    <property type="protein sequence ID" value="AAL87389.1"/>
    <property type="molecule type" value="mRNA"/>
</dbReference>
<dbReference type="EMBL" id="AY087752">
    <property type="protein sequence ID" value="AAM65288.1"/>
    <property type="molecule type" value="mRNA"/>
</dbReference>
<dbReference type="PIR" id="G86249">
    <property type="entry name" value="G86249"/>
</dbReference>
<dbReference type="RefSeq" id="NP_172629.1">
    <property type="nucleotide sequence ID" value="NM_101036.3"/>
</dbReference>
<dbReference type="SMR" id="Q9SAB4"/>
<dbReference type="BioGRID" id="22947">
    <property type="interactions" value="1"/>
</dbReference>
<dbReference type="FunCoup" id="Q9SAB4">
    <property type="interactions" value="618"/>
</dbReference>
<dbReference type="GlyGen" id="Q9SAB4">
    <property type="glycosylation" value="1 site"/>
</dbReference>
<dbReference type="iPTMnet" id="Q9SAB4"/>
<dbReference type="PaxDb" id="3702-AT1G11630.1"/>
<dbReference type="ProteomicsDB" id="234860"/>
<dbReference type="EnsemblPlants" id="AT1G11630.1">
    <property type="protein sequence ID" value="AT1G11630.1"/>
    <property type="gene ID" value="AT1G11630"/>
</dbReference>
<dbReference type="GeneID" id="837707"/>
<dbReference type="Gramene" id="AT1G11630.1">
    <property type="protein sequence ID" value="AT1G11630.1"/>
    <property type="gene ID" value="AT1G11630"/>
</dbReference>
<dbReference type="KEGG" id="ath:AT1G11630"/>
<dbReference type="Araport" id="AT1G11630"/>
<dbReference type="TAIR" id="AT1G11630">
    <property type="gene designation" value="PPR336L"/>
</dbReference>
<dbReference type="eggNOG" id="KOG4197">
    <property type="taxonomic scope" value="Eukaryota"/>
</dbReference>
<dbReference type="HOGENOM" id="CLU_002706_10_3_1"/>
<dbReference type="InParanoid" id="Q9SAB4"/>
<dbReference type="OMA" id="LYGRANM"/>
<dbReference type="OrthoDB" id="185373at2759"/>
<dbReference type="PhylomeDB" id="Q9SAB4"/>
<dbReference type="PRO" id="PR:Q9SAB4"/>
<dbReference type="Proteomes" id="UP000006548">
    <property type="component" value="Chromosome 1"/>
</dbReference>
<dbReference type="ExpressionAtlas" id="Q9SAB4">
    <property type="expression patterns" value="baseline and differential"/>
</dbReference>
<dbReference type="GO" id="GO:0005739">
    <property type="term" value="C:mitochondrion"/>
    <property type="evidence" value="ECO:0007005"/>
    <property type="project" value="TAIR"/>
</dbReference>
<dbReference type="FunFam" id="1.25.40.10:FF:001070">
    <property type="entry name" value="Pentatricopeptide repeat-containing protein At1g11630, mitochondrial"/>
    <property type="match status" value="1"/>
</dbReference>
<dbReference type="FunFam" id="1.25.40.10:FF:002935">
    <property type="entry name" value="Pentatricopeptide repeat-containing protein At1g61870, mitochondrial"/>
    <property type="match status" value="1"/>
</dbReference>
<dbReference type="Gene3D" id="1.25.40.10">
    <property type="entry name" value="Tetratricopeptide repeat domain"/>
    <property type="match status" value="2"/>
</dbReference>
<dbReference type="InterPro" id="IPR002885">
    <property type="entry name" value="Pentatricopeptide_rpt"/>
</dbReference>
<dbReference type="InterPro" id="IPR050667">
    <property type="entry name" value="PPR-containing_protein"/>
</dbReference>
<dbReference type="InterPro" id="IPR011990">
    <property type="entry name" value="TPR-like_helical_dom_sf"/>
</dbReference>
<dbReference type="NCBIfam" id="TIGR00756">
    <property type="entry name" value="PPR"/>
    <property type="match status" value="6"/>
</dbReference>
<dbReference type="PANTHER" id="PTHR47939:SF9">
    <property type="entry name" value="(WILD MALAYSIAN BANANA) HYPOTHETICAL PROTEIN"/>
    <property type="match status" value="1"/>
</dbReference>
<dbReference type="PANTHER" id="PTHR47939">
    <property type="entry name" value="MEMBRANE-ASSOCIATED SALT-INDUCIBLE PROTEIN-LIKE"/>
    <property type="match status" value="1"/>
</dbReference>
<dbReference type="Pfam" id="PF13041">
    <property type="entry name" value="PPR_2"/>
    <property type="match status" value="3"/>
</dbReference>
<dbReference type="PROSITE" id="PS51375">
    <property type="entry name" value="PPR"/>
    <property type="match status" value="8"/>
</dbReference>
<gene>
    <name type="ordered locus">At1g11630</name>
    <name type="ORF">F25C20.22</name>
</gene>
<comment type="subcellular location">
    <subcellularLocation>
        <location evidence="2">Mitochondrion</location>
    </subcellularLocation>
</comment>
<comment type="similarity">
    <text evidence="3">Belongs to the PPR family. P subfamily.</text>
</comment>
<comment type="online information" name="Pentatricopeptide repeat proteins">
    <link uri="https://ppr.plantenergy.uwa.edu.au"/>
</comment>
<accession>Q9SAB4</accession>
<organism>
    <name type="scientific">Arabidopsis thaliana</name>
    <name type="common">Mouse-ear cress</name>
    <dbReference type="NCBI Taxonomy" id="3702"/>
    <lineage>
        <taxon>Eukaryota</taxon>
        <taxon>Viridiplantae</taxon>
        <taxon>Streptophyta</taxon>
        <taxon>Embryophyta</taxon>
        <taxon>Tracheophyta</taxon>
        <taxon>Spermatophyta</taxon>
        <taxon>Magnoliopsida</taxon>
        <taxon>eudicotyledons</taxon>
        <taxon>Gunneridae</taxon>
        <taxon>Pentapetalae</taxon>
        <taxon>rosids</taxon>
        <taxon>malvids</taxon>
        <taxon>Brassicales</taxon>
        <taxon>Brassicaceae</taxon>
        <taxon>Camelineae</taxon>
        <taxon>Arabidopsis</taxon>
    </lineage>
</organism>